<dbReference type="EMBL" id="CR382123">
    <property type="protein sequence ID" value="CAH01674.1"/>
    <property type="molecule type" value="Genomic_DNA"/>
</dbReference>
<dbReference type="RefSeq" id="XP_452823.1">
    <property type="nucleotide sequence ID" value="XM_452823.1"/>
</dbReference>
<dbReference type="FunCoup" id="Q6CTB6">
    <property type="interactions" value="165"/>
</dbReference>
<dbReference type="STRING" id="284590.Q6CTB6"/>
<dbReference type="PaxDb" id="284590-Q6CTB6"/>
<dbReference type="KEGG" id="kla:KLLA0_C13948g"/>
<dbReference type="eggNOG" id="ENOG502QS0P">
    <property type="taxonomic scope" value="Eukaryota"/>
</dbReference>
<dbReference type="HOGENOM" id="CLU_007861_1_0_1"/>
<dbReference type="InParanoid" id="Q6CTB6"/>
<dbReference type="OMA" id="FQFFRPY"/>
<dbReference type="Proteomes" id="UP000000598">
    <property type="component" value="Chromosome C"/>
</dbReference>
<dbReference type="GO" id="GO:0005743">
    <property type="term" value="C:mitochondrial inner membrane"/>
    <property type="evidence" value="ECO:0007669"/>
    <property type="project" value="UniProtKB-SubCell"/>
</dbReference>
<dbReference type="GO" id="GO:0003723">
    <property type="term" value="F:RNA binding"/>
    <property type="evidence" value="ECO:0007669"/>
    <property type="project" value="UniProtKB-KW"/>
</dbReference>
<dbReference type="GO" id="GO:0000002">
    <property type="term" value="P:mitochondrial genome maintenance"/>
    <property type="evidence" value="ECO:0007669"/>
    <property type="project" value="InterPro"/>
</dbReference>
<dbReference type="GO" id="GO:0006397">
    <property type="term" value="P:mRNA processing"/>
    <property type="evidence" value="ECO:0007669"/>
    <property type="project" value="UniProtKB-KW"/>
</dbReference>
<dbReference type="CDD" id="cd12433">
    <property type="entry name" value="RRM_Yme2p_like"/>
    <property type="match status" value="1"/>
</dbReference>
<dbReference type="Gene3D" id="3.40.50.300">
    <property type="entry name" value="P-loop containing nucleotide triphosphate hydrolases"/>
    <property type="match status" value="1"/>
</dbReference>
<dbReference type="InterPro" id="IPR018850">
    <property type="entry name" value="Mt_escape_2_C"/>
</dbReference>
<dbReference type="InterPro" id="IPR027417">
    <property type="entry name" value="P-loop_NTPase"/>
</dbReference>
<dbReference type="InterPro" id="IPR035979">
    <property type="entry name" value="RBD_domain_sf"/>
</dbReference>
<dbReference type="InterPro" id="IPR039627">
    <property type="entry name" value="Yme2_C"/>
</dbReference>
<dbReference type="InterPro" id="IPR034260">
    <property type="entry name" value="Yme2_RRM"/>
</dbReference>
<dbReference type="PANTHER" id="PTHR32198">
    <property type="entry name" value="MITOCHONDRIAL ESCAPE PROTEIN 2"/>
    <property type="match status" value="1"/>
</dbReference>
<dbReference type="PANTHER" id="PTHR32198:SF2">
    <property type="entry name" value="MITOCHONDRIAL ESCAPE PROTEIN 2"/>
    <property type="match status" value="1"/>
</dbReference>
<dbReference type="Pfam" id="PF10443">
    <property type="entry name" value="RNA12"/>
    <property type="match status" value="1"/>
</dbReference>
<dbReference type="SUPFAM" id="SSF52540">
    <property type="entry name" value="P-loop containing nucleoside triphosphate hydrolases"/>
    <property type="match status" value="1"/>
</dbReference>
<dbReference type="SUPFAM" id="SSF54928">
    <property type="entry name" value="RNA-binding domain, RBD"/>
    <property type="match status" value="1"/>
</dbReference>
<organism>
    <name type="scientific">Kluyveromyces lactis (strain ATCC 8585 / CBS 2359 / DSM 70799 / NBRC 1267 / NRRL Y-1140 / WM37)</name>
    <name type="common">Yeast</name>
    <name type="synonym">Candida sphaerica</name>
    <dbReference type="NCBI Taxonomy" id="284590"/>
    <lineage>
        <taxon>Eukaryota</taxon>
        <taxon>Fungi</taxon>
        <taxon>Dikarya</taxon>
        <taxon>Ascomycota</taxon>
        <taxon>Saccharomycotina</taxon>
        <taxon>Saccharomycetes</taxon>
        <taxon>Saccharomycetales</taxon>
        <taxon>Saccharomycetaceae</taxon>
        <taxon>Kluyveromyces</taxon>
    </lineage>
</organism>
<reference key="1">
    <citation type="journal article" date="2004" name="Nature">
        <title>Genome evolution in yeasts.</title>
        <authorList>
            <person name="Dujon B."/>
            <person name="Sherman D."/>
            <person name="Fischer G."/>
            <person name="Durrens P."/>
            <person name="Casaregola S."/>
            <person name="Lafontaine I."/>
            <person name="de Montigny J."/>
            <person name="Marck C."/>
            <person name="Neuveglise C."/>
            <person name="Talla E."/>
            <person name="Goffard N."/>
            <person name="Frangeul L."/>
            <person name="Aigle M."/>
            <person name="Anthouard V."/>
            <person name="Babour A."/>
            <person name="Barbe V."/>
            <person name="Barnay S."/>
            <person name="Blanchin S."/>
            <person name="Beckerich J.-M."/>
            <person name="Beyne E."/>
            <person name="Bleykasten C."/>
            <person name="Boisrame A."/>
            <person name="Boyer J."/>
            <person name="Cattolico L."/>
            <person name="Confanioleri F."/>
            <person name="de Daruvar A."/>
            <person name="Despons L."/>
            <person name="Fabre E."/>
            <person name="Fairhead C."/>
            <person name="Ferry-Dumazet H."/>
            <person name="Groppi A."/>
            <person name="Hantraye F."/>
            <person name="Hennequin C."/>
            <person name="Jauniaux N."/>
            <person name="Joyet P."/>
            <person name="Kachouri R."/>
            <person name="Kerrest A."/>
            <person name="Koszul R."/>
            <person name="Lemaire M."/>
            <person name="Lesur I."/>
            <person name="Ma L."/>
            <person name="Muller H."/>
            <person name="Nicaud J.-M."/>
            <person name="Nikolski M."/>
            <person name="Oztas S."/>
            <person name="Ozier-Kalogeropoulos O."/>
            <person name="Pellenz S."/>
            <person name="Potier S."/>
            <person name="Richard G.-F."/>
            <person name="Straub M.-L."/>
            <person name="Suleau A."/>
            <person name="Swennen D."/>
            <person name="Tekaia F."/>
            <person name="Wesolowski-Louvel M."/>
            <person name="Westhof E."/>
            <person name="Wirth B."/>
            <person name="Zeniou-Meyer M."/>
            <person name="Zivanovic Y."/>
            <person name="Bolotin-Fukuhara M."/>
            <person name="Thierry A."/>
            <person name="Bouchier C."/>
            <person name="Caudron B."/>
            <person name="Scarpelli C."/>
            <person name="Gaillardin C."/>
            <person name="Weissenbach J."/>
            <person name="Wincker P."/>
            <person name="Souciet J.-L."/>
        </authorList>
    </citation>
    <scope>NUCLEOTIDE SEQUENCE [LARGE SCALE GENOMIC DNA]</scope>
    <source>
        <strain>ATCC 8585 / CBS 2359 / DSM 70799 / NBRC 1267 / NRRL Y-1140 / WM37</strain>
    </source>
</reference>
<name>YME2_KLULA</name>
<proteinExistence type="inferred from homology"/>
<accession>Q6CTB6</accession>
<sequence>MFLSRSIPQAFSLRYTTRYGKLILRPGRRFVSSEIQQKDEQAGESNTATDTGIIHKTEQETLIYFDNVYPRAMSLWSPTQWYNLLMSNQTRNAVRAKIFKFANPPDNPIHNLELRSTIPIKRDGGVFATFLVPPNYTTAEVNAMIQKNTQQESSKSWFSFFTEVTAFPVKGSPWIEDLRRLPSNQIRVKFEGGFLTEEEVYALFRRYGTIINIYPNPKEMTYLISYRSFRGAICAKNCVSGMEVHNSIIHVQYEQLTQGHVISDFFVNHTRIAVPLLLALLSILAVIVFDPIREFTIEQKITHKYSLSWDNYFLKKILSVTSSTMSSVKEYWGITDRHVQKRQLWEERQEKVADLKLWLQENNNTFVVLRGPRGSGKHELVMQHTLHDRPNVLYLDCDKLIKSRTDAKFLRNAASQLGYFPIFPWVNSVTNLLDLAVQGLTGQKSGLSESKELQFRNMLSTAMMSIRHIALKGYKPVIGSGDSIINVKEEDYLQQHPEKKPVIVIDRFNNRAEMNGFVYKELSDWAAMLVQMNLAHVIFLTETVSPNQLLAESLPNQVFKMMTLSDASKKSARRYVLAQLQETTEDDDDIDTSKPLDLNEKFVHEIDDSLDPIGGRMLDLQAFVRRVKSGEQPKEALEKMVEQASEQITQIFLSGSADPLRGAQAWELIELLSANGSIRFRDIIYRPLFKAAPEAALLDLEKNGFVTMTRDRGVLTDIYPAKPLFCAAFQYLLNNKEMYNVLRTSYLLRMVTFETGRIKKWEEELRALGKVSDQKMFRSRLAYLAGKIDASSAAIDDCESEVKELSKK</sequence>
<gene>
    <name type="primary">YME2</name>
    <name type="ordered locus">KLLA0C13948g</name>
</gene>
<protein>
    <recommendedName>
        <fullName>Mitochondrial escape protein 2</fullName>
    </recommendedName>
</protein>
<evidence type="ECO:0000250" key="1"/>
<evidence type="ECO:0000255" key="2"/>
<evidence type="ECO:0000305" key="3"/>
<feature type="transit peptide" description="Mitochondrion" evidence="2">
    <location>
        <begin position="1"/>
        <end position="30"/>
    </location>
</feature>
<feature type="chain" id="PRO_0000343123" description="Mitochondrial escape protein 2">
    <location>
        <begin position="31"/>
        <end position="808"/>
    </location>
</feature>
<feature type="topological domain" description="Mitochondrial matrix" evidence="2">
    <location>
        <begin position="31"/>
        <end position="271"/>
    </location>
</feature>
<feature type="transmembrane region" description="Helical" evidence="2">
    <location>
        <begin position="272"/>
        <end position="292"/>
    </location>
</feature>
<feature type="topological domain" description="Mitochondrial intermembrane" evidence="2">
    <location>
        <begin position="293"/>
        <end position="808"/>
    </location>
</feature>
<feature type="domain" description="RRM">
    <location>
        <begin position="184"/>
        <end position="256"/>
    </location>
</feature>
<comment type="function">
    <text evidence="1">Plays a role in maintaining the mitochondrial genome and in controlling the mtDNA escape. Involved in the regulation of mtDNA nucleotide structure and number. May have a dispensable role in early maturation of pre-rRNA (By similarity).</text>
</comment>
<comment type="subcellular location">
    <subcellularLocation>
        <location evidence="1">Mitochondrion inner membrane</location>
        <topology evidence="1">Single-pass membrane protein</topology>
    </subcellularLocation>
</comment>
<comment type="similarity">
    <text evidence="3">Belongs to the YME2 family.</text>
</comment>
<keyword id="KW-0472">Membrane</keyword>
<keyword id="KW-0496">Mitochondrion</keyword>
<keyword id="KW-0999">Mitochondrion inner membrane</keyword>
<keyword id="KW-0507">mRNA processing</keyword>
<keyword id="KW-1185">Reference proteome</keyword>
<keyword id="KW-0694">RNA-binding</keyword>
<keyword id="KW-0809">Transit peptide</keyword>
<keyword id="KW-0812">Transmembrane</keyword>
<keyword id="KW-1133">Transmembrane helix</keyword>